<name>YCF3_PROM3</name>
<feature type="chain" id="PRO_1000025967" description="Photosystem I assembly protein Ycf3">
    <location>
        <begin position="1"/>
        <end position="173"/>
    </location>
</feature>
<feature type="repeat" description="TPR 1">
    <location>
        <begin position="35"/>
        <end position="68"/>
    </location>
</feature>
<feature type="repeat" description="TPR 2">
    <location>
        <begin position="72"/>
        <end position="105"/>
    </location>
</feature>
<feature type="repeat" description="TPR 3">
    <location>
        <begin position="120"/>
        <end position="153"/>
    </location>
</feature>
<sequence>MPRTQNKDNFIDKTFTVMADLIVKMMPINDKAKRAYVYYRDGLSAQNAGDYAEALENYEESLKLEESPFDRSETLKNMAIIYMSNGDEDLALDTYQRALDQNSNQPSCLKNMGLIYEKRGRTAQEAGLQDEADQLFDRAADVWTQAVRLYPGGYLDIENWLKTTGRSNIDVYF</sequence>
<comment type="function">
    <text evidence="1">Essential for the assembly of the photosystem I (PSI) complex. May act as a chaperone-like factor to guide the assembly of the PSI subunits.</text>
</comment>
<comment type="subcellular location">
    <subcellularLocation>
        <location evidence="1">Cellular thylakoid membrane</location>
        <topology evidence="1">Peripheral membrane protein</topology>
    </subcellularLocation>
</comment>
<comment type="similarity">
    <text evidence="1">Belongs to the Ycf3 family.</text>
</comment>
<accession>A2CD21</accession>
<reference key="1">
    <citation type="journal article" date="2007" name="PLoS Genet.">
        <title>Patterns and implications of gene gain and loss in the evolution of Prochlorococcus.</title>
        <authorList>
            <person name="Kettler G.C."/>
            <person name="Martiny A.C."/>
            <person name="Huang K."/>
            <person name="Zucker J."/>
            <person name="Coleman M.L."/>
            <person name="Rodrigue S."/>
            <person name="Chen F."/>
            <person name="Lapidus A."/>
            <person name="Ferriera S."/>
            <person name="Johnson J."/>
            <person name="Steglich C."/>
            <person name="Church G.M."/>
            <person name="Richardson P."/>
            <person name="Chisholm S.W."/>
        </authorList>
    </citation>
    <scope>NUCLEOTIDE SEQUENCE [LARGE SCALE GENOMIC DNA]</scope>
    <source>
        <strain>MIT 9303</strain>
    </source>
</reference>
<dbReference type="EMBL" id="CP000554">
    <property type="protein sequence ID" value="ABM79381.1"/>
    <property type="molecule type" value="Genomic_DNA"/>
</dbReference>
<dbReference type="RefSeq" id="WP_011827224.1">
    <property type="nucleotide sequence ID" value="NC_008820.1"/>
</dbReference>
<dbReference type="SMR" id="A2CD21"/>
<dbReference type="STRING" id="59922.P9303_26511"/>
<dbReference type="KEGG" id="pmf:P9303_26511"/>
<dbReference type="HOGENOM" id="CLU_141248_0_0_3"/>
<dbReference type="BioCyc" id="PMAR59922:G1G80-2322-MONOMER"/>
<dbReference type="Proteomes" id="UP000002274">
    <property type="component" value="Chromosome"/>
</dbReference>
<dbReference type="GO" id="GO:0031676">
    <property type="term" value="C:plasma membrane-derived thylakoid membrane"/>
    <property type="evidence" value="ECO:0007669"/>
    <property type="project" value="UniProtKB-SubCell"/>
</dbReference>
<dbReference type="GO" id="GO:0015979">
    <property type="term" value="P:photosynthesis"/>
    <property type="evidence" value="ECO:0007669"/>
    <property type="project" value="UniProtKB-UniRule"/>
</dbReference>
<dbReference type="Gene3D" id="1.25.40.10">
    <property type="entry name" value="Tetratricopeptide repeat domain"/>
    <property type="match status" value="1"/>
</dbReference>
<dbReference type="HAMAP" id="MF_00439">
    <property type="entry name" value="Ycf3"/>
    <property type="match status" value="1"/>
</dbReference>
<dbReference type="InterPro" id="IPR022818">
    <property type="entry name" value="PSI_Ycf3_assembly"/>
</dbReference>
<dbReference type="InterPro" id="IPR011990">
    <property type="entry name" value="TPR-like_helical_dom_sf"/>
</dbReference>
<dbReference type="InterPro" id="IPR019734">
    <property type="entry name" value="TPR_rpt"/>
</dbReference>
<dbReference type="NCBIfam" id="NF002725">
    <property type="entry name" value="PRK02603.1"/>
    <property type="match status" value="1"/>
</dbReference>
<dbReference type="Pfam" id="PF13424">
    <property type="entry name" value="TPR_12"/>
    <property type="match status" value="1"/>
</dbReference>
<dbReference type="SMART" id="SM00028">
    <property type="entry name" value="TPR"/>
    <property type="match status" value="2"/>
</dbReference>
<dbReference type="SUPFAM" id="SSF48452">
    <property type="entry name" value="TPR-like"/>
    <property type="match status" value="1"/>
</dbReference>
<dbReference type="PROSITE" id="PS50005">
    <property type="entry name" value="TPR"/>
    <property type="match status" value="2"/>
</dbReference>
<dbReference type="PROSITE" id="PS50293">
    <property type="entry name" value="TPR_REGION"/>
    <property type="match status" value="1"/>
</dbReference>
<proteinExistence type="inferred from homology"/>
<keyword id="KW-0472">Membrane</keyword>
<keyword id="KW-0602">Photosynthesis</keyword>
<keyword id="KW-0677">Repeat</keyword>
<keyword id="KW-0793">Thylakoid</keyword>
<keyword id="KW-0802">TPR repeat</keyword>
<organism>
    <name type="scientific">Prochlorococcus marinus (strain MIT 9303)</name>
    <dbReference type="NCBI Taxonomy" id="59922"/>
    <lineage>
        <taxon>Bacteria</taxon>
        <taxon>Bacillati</taxon>
        <taxon>Cyanobacteriota</taxon>
        <taxon>Cyanophyceae</taxon>
        <taxon>Synechococcales</taxon>
        <taxon>Prochlorococcaceae</taxon>
        <taxon>Prochlorococcus</taxon>
    </lineage>
</organism>
<gene>
    <name evidence="1" type="primary">ycf3</name>
    <name type="ordered locus">P9303_26511</name>
</gene>
<protein>
    <recommendedName>
        <fullName evidence="1">Photosystem I assembly protein Ycf3</fullName>
    </recommendedName>
</protein>
<evidence type="ECO:0000255" key="1">
    <source>
        <dbReference type="HAMAP-Rule" id="MF_00439"/>
    </source>
</evidence>